<dbReference type="EC" id="2.1.1.166"/>
<dbReference type="EMBL" id="AF481102">
    <property type="protein sequence ID" value="AAM75988.1"/>
    <property type="molecule type" value="Genomic_DNA"/>
</dbReference>
<dbReference type="SMR" id="Q8KTR0"/>
<dbReference type="STRING" id="1053648.TCP_037"/>
<dbReference type="GO" id="GO:0005737">
    <property type="term" value="C:cytoplasm"/>
    <property type="evidence" value="ECO:0007669"/>
    <property type="project" value="UniProtKB-SubCell"/>
</dbReference>
<dbReference type="GO" id="GO:0008650">
    <property type="term" value="F:rRNA (uridine-2'-O-)-methyltransferase activity"/>
    <property type="evidence" value="ECO:0007669"/>
    <property type="project" value="UniProtKB-UniRule"/>
</dbReference>
<dbReference type="Gene3D" id="3.40.50.150">
    <property type="entry name" value="Vaccinia Virus protein VP39"/>
    <property type="match status" value="1"/>
</dbReference>
<dbReference type="HAMAP" id="MF_01547">
    <property type="entry name" value="RNA_methyltr_E"/>
    <property type="match status" value="1"/>
</dbReference>
<dbReference type="InterPro" id="IPR050082">
    <property type="entry name" value="RNA_methyltr_RlmE"/>
</dbReference>
<dbReference type="InterPro" id="IPR002877">
    <property type="entry name" value="RNA_MeTrfase_FtsJ_dom"/>
</dbReference>
<dbReference type="InterPro" id="IPR015507">
    <property type="entry name" value="rRNA-MeTfrase_E"/>
</dbReference>
<dbReference type="InterPro" id="IPR029063">
    <property type="entry name" value="SAM-dependent_MTases_sf"/>
</dbReference>
<dbReference type="PANTHER" id="PTHR10920">
    <property type="entry name" value="RIBOSOMAL RNA METHYLTRANSFERASE"/>
    <property type="match status" value="1"/>
</dbReference>
<dbReference type="PANTHER" id="PTHR10920:SF18">
    <property type="entry name" value="RRNA METHYLTRANSFERASE 2, MITOCHONDRIAL"/>
    <property type="match status" value="1"/>
</dbReference>
<dbReference type="Pfam" id="PF01728">
    <property type="entry name" value="FtsJ"/>
    <property type="match status" value="1"/>
</dbReference>
<dbReference type="PIRSF" id="PIRSF005461">
    <property type="entry name" value="23S_rRNA_mtase"/>
    <property type="match status" value="1"/>
</dbReference>
<dbReference type="SUPFAM" id="SSF53335">
    <property type="entry name" value="S-adenosyl-L-methionine-dependent methyltransferases"/>
    <property type="match status" value="1"/>
</dbReference>
<protein>
    <recommendedName>
        <fullName>Ribosomal RNA large subunit methyltransferase E</fullName>
        <ecNumber>2.1.1.166</ecNumber>
    </recommendedName>
    <alternativeName>
        <fullName>23S rRNA Um2552 methyltransferase</fullName>
    </alternativeName>
    <alternativeName>
        <fullName>rRNA (uridine-2'-O-)-methyltransferase</fullName>
    </alternativeName>
</protein>
<sequence>MGRTSEWYARHVGDSFVRTSKAWGYRARAACKLKRLDAKYGLMSRQCDVLELGSSPGVWSQYISYERRVSGMAWRTVSVDTRAMVRVRGVSFIHGDITEAETMAEVSSRLPSGVGLILSDICPHPSCERYLDSIATAKVAETLLMVSRRFLLDGGALLHKTFVIRAEHIASVMERHFSSVEVYRDASSRSFNSEAYLLCVGD</sequence>
<comment type="function">
    <text evidence="1">Specifically methylates the uridine in position 2552 of 23S rRNA at the 2'-O position of the ribose in the fully assembled 50S ribosomal subunit.</text>
</comment>
<comment type="catalytic activity">
    <reaction>
        <text>uridine(2552) in 23S rRNA + S-adenosyl-L-methionine = 2'-O-methyluridine(2552) in 23S rRNA + S-adenosyl-L-homocysteine + H(+)</text>
        <dbReference type="Rhea" id="RHEA:42720"/>
        <dbReference type="Rhea" id="RHEA-COMP:10202"/>
        <dbReference type="Rhea" id="RHEA-COMP:10203"/>
        <dbReference type="ChEBI" id="CHEBI:15378"/>
        <dbReference type="ChEBI" id="CHEBI:57856"/>
        <dbReference type="ChEBI" id="CHEBI:59789"/>
        <dbReference type="ChEBI" id="CHEBI:65315"/>
        <dbReference type="ChEBI" id="CHEBI:74478"/>
        <dbReference type="EC" id="2.1.1.166"/>
    </reaction>
</comment>
<comment type="subcellular location">
    <subcellularLocation>
        <location evidence="1">Cytoplasm</location>
    </subcellularLocation>
</comment>
<comment type="similarity">
    <text evidence="2">Belongs to the class I-like SAM-binding methyltransferase superfamily. RNA methyltransferase RlmE family.</text>
</comment>
<reference key="1">
    <citation type="journal article" date="2002" name="Appl. Environ. Microbiol.">
        <title>The genetic properties of the primary endosymbionts of mealybugs differ from those of other endosymbionts of plant sap-sucking insects.</title>
        <authorList>
            <person name="Baumann L."/>
            <person name="Thao M.L."/>
            <person name="Hess J.M."/>
            <person name="Johnson M.W."/>
            <person name="Baumann P."/>
        </authorList>
    </citation>
    <scope>NUCLEOTIDE SEQUENCE [GENOMIC DNA]</scope>
</reference>
<keyword id="KW-0963">Cytoplasm</keyword>
<keyword id="KW-0489">Methyltransferase</keyword>
<keyword id="KW-0698">rRNA processing</keyword>
<keyword id="KW-0949">S-adenosyl-L-methionine</keyword>
<keyword id="KW-0808">Transferase</keyword>
<name>RLME_TREPR</name>
<organism>
    <name type="scientific">Tremblaya princeps</name>
    <dbReference type="NCBI Taxonomy" id="189385"/>
    <lineage>
        <taxon>Bacteria</taxon>
        <taxon>Pseudomonadati</taxon>
        <taxon>Pseudomonadota</taxon>
        <taxon>Betaproteobacteria</taxon>
        <taxon>Candidatus Tremblaya</taxon>
    </lineage>
</organism>
<proteinExistence type="inferred from homology"/>
<accession>Q8KTR0</accession>
<feature type="chain" id="PRO_0000155543" description="Ribosomal RNA large subunit methyltransferase E">
    <location>
        <begin position="1"/>
        <end position="202"/>
    </location>
</feature>
<feature type="active site" description="Proton acceptor" evidence="1">
    <location>
        <position position="160"/>
    </location>
</feature>
<feature type="binding site" evidence="1">
    <location>
        <position position="57"/>
    </location>
    <ligand>
        <name>S-adenosyl-L-methionine</name>
        <dbReference type="ChEBI" id="CHEBI:59789"/>
    </ligand>
</feature>
<feature type="binding site" evidence="1">
    <location>
        <position position="59"/>
    </location>
    <ligand>
        <name>S-adenosyl-L-methionine</name>
        <dbReference type="ChEBI" id="CHEBI:59789"/>
    </ligand>
</feature>
<feature type="binding site" evidence="1">
    <location>
        <position position="80"/>
    </location>
    <ligand>
        <name>S-adenosyl-L-methionine</name>
        <dbReference type="ChEBI" id="CHEBI:59789"/>
    </ligand>
</feature>
<feature type="binding site" evidence="1">
    <location>
        <position position="96"/>
    </location>
    <ligand>
        <name>S-adenosyl-L-methionine</name>
        <dbReference type="ChEBI" id="CHEBI:59789"/>
    </ligand>
</feature>
<feature type="binding site" evidence="1">
    <location>
        <position position="120"/>
    </location>
    <ligand>
        <name>S-adenosyl-L-methionine</name>
        <dbReference type="ChEBI" id="CHEBI:59789"/>
    </ligand>
</feature>
<evidence type="ECO:0000250" key="1"/>
<evidence type="ECO:0000305" key="2"/>
<gene>
    <name type="primary">rlmE</name>
    <name type="synonym">ftsJ</name>
    <name type="synonym">rrmJ</name>
</gene>